<proteinExistence type="inferred from homology"/>
<dbReference type="EC" id="6.3.5.-" evidence="1"/>
<dbReference type="EMBL" id="CP001283">
    <property type="protein sequence ID" value="ACK90835.1"/>
    <property type="molecule type" value="Genomic_DNA"/>
</dbReference>
<dbReference type="RefSeq" id="WP_000086999.1">
    <property type="nucleotide sequence ID" value="NC_011773.1"/>
</dbReference>
<dbReference type="SMR" id="B7JMB1"/>
<dbReference type="GeneID" id="93010705"/>
<dbReference type="KEGG" id="bcu:BCAH820_0352"/>
<dbReference type="HOGENOM" id="CLU_105899_6_1_9"/>
<dbReference type="Proteomes" id="UP000001363">
    <property type="component" value="Chromosome"/>
</dbReference>
<dbReference type="GO" id="GO:0050566">
    <property type="term" value="F:asparaginyl-tRNA synthase (glutamine-hydrolyzing) activity"/>
    <property type="evidence" value="ECO:0007669"/>
    <property type="project" value="RHEA"/>
</dbReference>
<dbReference type="GO" id="GO:0005524">
    <property type="term" value="F:ATP binding"/>
    <property type="evidence" value="ECO:0007669"/>
    <property type="project" value="UniProtKB-KW"/>
</dbReference>
<dbReference type="GO" id="GO:0050567">
    <property type="term" value="F:glutaminyl-tRNA synthase (glutamine-hydrolyzing) activity"/>
    <property type="evidence" value="ECO:0007669"/>
    <property type="project" value="UniProtKB-UniRule"/>
</dbReference>
<dbReference type="GO" id="GO:0070681">
    <property type="term" value="P:glutaminyl-tRNAGln biosynthesis via transamidation"/>
    <property type="evidence" value="ECO:0007669"/>
    <property type="project" value="TreeGrafter"/>
</dbReference>
<dbReference type="GO" id="GO:0006450">
    <property type="term" value="P:regulation of translational fidelity"/>
    <property type="evidence" value="ECO:0007669"/>
    <property type="project" value="InterPro"/>
</dbReference>
<dbReference type="GO" id="GO:0006412">
    <property type="term" value="P:translation"/>
    <property type="evidence" value="ECO:0007669"/>
    <property type="project" value="UniProtKB-UniRule"/>
</dbReference>
<dbReference type="Gene3D" id="1.10.20.60">
    <property type="entry name" value="Glu-tRNAGln amidotransferase C subunit, N-terminal domain"/>
    <property type="match status" value="1"/>
</dbReference>
<dbReference type="HAMAP" id="MF_00122">
    <property type="entry name" value="GatC"/>
    <property type="match status" value="1"/>
</dbReference>
<dbReference type="InterPro" id="IPR036113">
    <property type="entry name" value="Asp/Glu-ADT_sf_sub_c"/>
</dbReference>
<dbReference type="InterPro" id="IPR003837">
    <property type="entry name" value="GatC"/>
</dbReference>
<dbReference type="NCBIfam" id="TIGR00135">
    <property type="entry name" value="gatC"/>
    <property type="match status" value="1"/>
</dbReference>
<dbReference type="PANTHER" id="PTHR15004">
    <property type="entry name" value="GLUTAMYL-TRNA(GLN) AMIDOTRANSFERASE SUBUNIT C, MITOCHONDRIAL"/>
    <property type="match status" value="1"/>
</dbReference>
<dbReference type="PANTHER" id="PTHR15004:SF0">
    <property type="entry name" value="GLUTAMYL-TRNA(GLN) AMIDOTRANSFERASE SUBUNIT C, MITOCHONDRIAL"/>
    <property type="match status" value="1"/>
</dbReference>
<dbReference type="Pfam" id="PF02686">
    <property type="entry name" value="GatC"/>
    <property type="match status" value="1"/>
</dbReference>
<dbReference type="SUPFAM" id="SSF141000">
    <property type="entry name" value="Glu-tRNAGln amidotransferase C subunit"/>
    <property type="match status" value="1"/>
</dbReference>
<name>GATC_BACC0</name>
<feature type="chain" id="PRO_1000117626" description="Aspartyl/glutamyl-tRNA(Asn/Gln) amidotransferase subunit C">
    <location>
        <begin position="1"/>
        <end position="96"/>
    </location>
</feature>
<organism>
    <name type="scientific">Bacillus cereus (strain AH820)</name>
    <dbReference type="NCBI Taxonomy" id="405535"/>
    <lineage>
        <taxon>Bacteria</taxon>
        <taxon>Bacillati</taxon>
        <taxon>Bacillota</taxon>
        <taxon>Bacilli</taxon>
        <taxon>Bacillales</taxon>
        <taxon>Bacillaceae</taxon>
        <taxon>Bacillus</taxon>
        <taxon>Bacillus cereus group</taxon>
    </lineage>
</organism>
<protein>
    <recommendedName>
        <fullName evidence="1">Aspartyl/glutamyl-tRNA(Asn/Gln) amidotransferase subunit C</fullName>
        <shortName evidence="1">Asp/Glu-ADT subunit C</shortName>
        <ecNumber evidence="1">6.3.5.-</ecNumber>
    </recommendedName>
</protein>
<comment type="function">
    <text evidence="1">Allows the formation of correctly charged Asn-tRNA(Asn) or Gln-tRNA(Gln) through the transamidation of misacylated Asp-tRNA(Asn) or Glu-tRNA(Gln) in organisms which lack either or both of asparaginyl-tRNA or glutaminyl-tRNA synthetases. The reaction takes place in the presence of glutamine and ATP through an activated phospho-Asp-tRNA(Asn) or phospho-Glu-tRNA(Gln).</text>
</comment>
<comment type="catalytic activity">
    <reaction evidence="1">
        <text>L-glutamyl-tRNA(Gln) + L-glutamine + ATP + H2O = L-glutaminyl-tRNA(Gln) + L-glutamate + ADP + phosphate + H(+)</text>
        <dbReference type="Rhea" id="RHEA:17521"/>
        <dbReference type="Rhea" id="RHEA-COMP:9681"/>
        <dbReference type="Rhea" id="RHEA-COMP:9684"/>
        <dbReference type="ChEBI" id="CHEBI:15377"/>
        <dbReference type="ChEBI" id="CHEBI:15378"/>
        <dbReference type="ChEBI" id="CHEBI:29985"/>
        <dbReference type="ChEBI" id="CHEBI:30616"/>
        <dbReference type="ChEBI" id="CHEBI:43474"/>
        <dbReference type="ChEBI" id="CHEBI:58359"/>
        <dbReference type="ChEBI" id="CHEBI:78520"/>
        <dbReference type="ChEBI" id="CHEBI:78521"/>
        <dbReference type="ChEBI" id="CHEBI:456216"/>
    </reaction>
</comment>
<comment type="catalytic activity">
    <reaction evidence="1">
        <text>L-aspartyl-tRNA(Asn) + L-glutamine + ATP + H2O = L-asparaginyl-tRNA(Asn) + L-glutamate + ADP + phosphate + 2 H(+)</text>
        <dbReference type="Rhea" id="RHEA:14513"/>
        <dbReference type="Rhea" id="RHEA-COMP:9674"/>
        <dbReference type="Rhea" id="RHEA-COMP:9677"/>
        <dbReference type="ChEBI" id="CHEBI:15377"/>
        <dbReference type="ChEBI" id="CHEBI:15378"/>
        <dbReference type="ChEBI" id="CHEBI:29985"/>
        <dbReference type="ChEBI" id="CHEBI:30616"/>
        <dbReference type="ChEBI" id="CHEBI:43474"/>
        <dbReference type="ChEBI" id="CHEBI:58359"/>
        <dbReference type="ChEBI" id="CHEBI:78515"/>
        <dbReference type="ChEBI" id="CHEBI:78516"/>
        <dbReference type="ChEBI" id="CHEBI:456216"/>
    </reaction>
</comment>
<comment type="subunit">
    <text evidence="1">Heterotrimer of A, B and C subunits.</text>
</comment>
<comment type="similarity">
    <text evidence="1">Belongs to the GatC family.</text>
</comment>
<sequence>MSRISVENVKHVAHLARLAITDQEAEKFQKQLDAIVTFAEQLNELDTTDVKPTTHVLTMKNVMREDVPEKGLPVEEVLKNAPDHKDNQIRVPAVLE</sequence>
<evidence type="ECO:0000255" key="1">
    <source>
        <dbReference type="HAMAP-Rule" id="MF_00122"/>
    </source>
</evidence>
<accession>B7JMB1</accession>
<reference key="1">
    <citation type="submission" date="2008-10" db="EMBL/GenBank/DDBJ databases">
        <title>Genome sequence of Bacillus cereus AH820.</title>
        <authorList>
            <person name="Dodson R.J."/>
            <person name="Durkin A.S."/>
            <person name="Rosovitz M.J."/>
            <person name="Rasko D.A."/>
            <person name="Hoffmaster A."/>
            <person name="Ravel J."/>
            <person name="Sutton G."/>
        </authorList>
    </citation>
    <scope>NUCLEOTIDE SEQUENCE [LARGE SCALE GENOMIC DNA]</scope>
    <source>
        <strain>AH820</strain>
    </source>
</reference>
<gene>
    <name evidence="1" type="primary">gatC</name>
    <name type="ordered locus">BCAH820_0352</name>
</gene>
<keyword id="KW-0067">ATP-binding</keyword>
<keyword id="KW-0436">Ligase</keyword>
<keyword id="KW-0547">Nucleotide-binding</keyword>
<keyword id="KW-0648">Protein biosynthesis</keyword>